<evidence type="ECO:0000250" key="1">
    <source>
        <dbReference type="UniProtKB" id="Q91X84"/>
    </source>
</evidence>
<evidence type="ECO:0000256" key="2">
    <source>
        <dbReference type="SAM" id="MobiDB-lite"/>
    </source>
</evidence>
<evidence type="ECO:0000269" key="3">
    <source>
    </source>
</evidence>
<evidence type="ECO:0000269" key="4">
    <source>
    </source>
</evidence>
<evidence type="ECO:0000269" key="5">
    <source>
    </source>
</evidence>
<evidence type="ECO:0000269" key="6">
    <source>
    </source>
</evidence>
<evidence type="ECO:0000269" key="7">
    <source>
    </source>
</evidence>
<evidence type="ECO:0000269" key="8">
    <source>
    </source>
</evidence>
<evidence type="ECO:0000269" key="9">
    <source>
    </source>
</evidence>
<evidence type="ECO:0000269" key="10">
    <source>
    </source>
</evidence>
<evidence type="ECO:0000269" key="11">
    <source>
    </source>
</evidence>
<evidence type="ECO:0000269" key="12">
    <source>
    </source>
</evidence>
<evidence type="ECO:0000269" key="13">
    <source>
    </source>
</evidence>
<evidence type="ECO:0000269" key="14">
    <source>
    </source>
</evidence>
<evidence type="ECO:0000269" key="15">
    <source>
    </source>
</evidence>
<evidence type="ECO:0000303" key="16">
    <source>
    </source>
</evidence>
<evidence type="ECO:0000305" key="17"/>
<evidence type="ECO:0007744" key="18">
    <source>
    </source>
</evidence>
<evidence type="ECO:0007744" key="19">
    <source>
    </source>
</evidence>
<evidence type="ECO:0007744" key="20">
    <source>
    </source>
</evidence>
<evidence type="ECO:0007744" key="21">
    <source>
    </source>
</evidence>
<evidence type="ECO:0007744" key="22">
    <source>
    </source>
</evidence>
<evidence type="ECO:0007744" key="23">
    <source>
    </source>
</evidence>
<evidence type="ECO:0007744" key="24">
    <source>
    </source>
</evidence>
<protein>
    <recommendedName>
        <fullName>CREB-regulated transcription coactivator 3</fullName>
    </recommendedName>
    <alternativeName>
        <fullName>Transducer of regulated cAMP response element-binding protein 3</fullName>
        <shortName>TORC-3</shortName>
        <shortName>Transducer of CREB protein 3</shortName>
    </alternativeName>
</protein>
<keyword id="KW-0010">Activator</keyword>
<keyword id="KW-0025">Alternative splicing</keyword>
<keyword id="KW-0963">Cytoplasm</keyword>
<keyword id="KW-0945">Host-virus interaction</keyword>
<keyword id="KW-1017">Isopeptide bond</keyword>
<keyword id="KW-0539">Nucleus</keyword>
<keyword id="KW-0597">Phosphoprotein</keyword>
<keyword id="KW-1267">Proteomics identification</keyword>
<keyword id="KW-1185">Reference proteome</keyword>
<keyword id="KW-0804">Transcription</keyword>
<keyword id="KW-0805">Transcription regulation</keyword>
<keyword id="KW-0832">Ubl conjugation</keyword>
<comment type="function">
    <text evidence="4 6 7 11 12 13 14">Transcriptional coactivator for CREB1 which activates transcription through both consensus and variant cAMP response element (CRE) sites. Acts as a coactivator, in the SIK/TORC signaling pathway, being active when dephosphorylated and acts independently of CREB1 'Ser-133' phosphorylation. Enhances the interaction of CREB1 with TAF4. Regulates the expression of specific CREB-activated genes such as the steroidogenic gene, StAR. Potent coactivator of PPARGC1A and inducer of mitochondrial biogenesis in muscle cells. Also coactivator for TAX activation of the human T-cell leukemia virus type 1 (HTLV-1) long terminal repeats (LTR).</text>
</comment>
<comment type="subunit">
    <text evidence="1 4 14 15">Binding, as a tetramer, through its N-terminal region, with the bZIP domain of CREB1 enhances recruitment of TAF4 to the promoter (PubMed:14506290). 'Arg-314' in the bZIP domain of CREB1 is essential for this interaction (PubMed:14506290). Interacts (when phosphorylated at Ser-162 and Se-273) with 14-3-3 proteins (PubMed:30611118). Interacts with YWHAE (PubMed:30611118). Interacts (when phosphorylated at Ser-391) with phosphatase PP2A catalytic subunit PPP2CA and regulatory subunits PPP2R1A and PPP2R2A (PubMed:30611118). Interacts, via the N-terminal with the ankyrin repeats of BCL3, to form a complex with CREB1 on CRE and TxRE responsive elements and represses HTLV-1 LTR-mediated transcription (PubMed:17644518).</text>
</comment>
<comment type="subunit">
    <text evidence="7 10">(Microbial infection) Interacts with HTLV-1 protein Tax; this interaction enhances tax transcriptional activity.</text>
</comment>
<comment type="interaction">
    <interactant intactId="EBI-3453588">
        <id>Q6UUV7</id>
    </interactant>
    <interactant intactId="EBI-11982647">
        <id>Q8N1Q1</id>
        <label>CA13</label>
    </interactant>
    <organismsDiffer>false</organismsDiffer>
    <experiments>3</experiments>
</comment>
<comment type="interaction">
    <interactant intactId="EBI-3453588">
        <id>Q6UUV7</id>
    </interactant>
    <interactant intactId="EBI-359832">
        <id>P61981</id>
        <label>YWHAG</label>
    </interactant>
    <organismsDiffer>false</organismsDiffer>
    <experiments>7</experiments>
</comment>
<comment type="subcellular location">
    <subcellularLocation>
        <location evidence="6 9 11 15">Nucleus</location>
    </subcellularLocation>
    <subcellularLocation>
        <location evidence="9 11 15">Cytoplasm</location>
    </subcellularLocation>
    <text evidence="6 15">Appears to be mainly nuclear (PubMed:15454081). Translocates to the nucleus following adenylyl cyclase or MAP kinase activation (PubMed:30611118).</text>
</comment>
<comment type="alternative products">
    <event type="alternative splicing"/>
    <isoform>
        <id>Q6UUV7-1</id>
        <name>1</name>
        <sequence type="displayed"/>
    </isoform>
    <isoform>
        <id>Q6UUV7-3</id>
        <name>3</name>
        <sequence type="described" ref="VSP_031220"/>
    </isoform>
</comment>
<comment type="tissue specificity">
    <text evidence="5 12">Predominantly expressed in B and T lymphocytes. Highest levels in lung. Also expressed in brain, colon, heart, kidney, ovary, and prostate. Weak expression in liver, pancreas, muscle, small intestine, spleen and stomach.</text>
</comment>
<comment type="PTM">
    <text evidence="1 15">Phosphorylation/dephosphorylation states of Ser-273 are required for regulating transduction of CREB activity (By similarity). CRTCs/TORCs are inactive when phosphorylated, and active when dephosphorylated at this site (By similarity). May be phosphorylated at Ser-391 by MAPK3/ERK1 and/or MAPK1/ERK2 or by some cyclin-dependent kinases such as CDK1,CDK2 or CDK5 (PubMed:30611118). Following adenylyl cyclase activation, dephosphorylated at Ser-162 and Ser-273 resulting in its dissociation from 14-3-3 proteins probably promoting CRTC3 translocation into the nucleus (PubMed:30611118).</text>
</comment>
<comment type="similarity">
    <text evidence="17">Belongs to the TORC family.</text>
</comment>
<comment type="sequence caution" evidence="17">
    <conflict type="frameshift">
        <sequence resource="EMBL-CDS" id="BAC03424"/>
    </conflict>
</comment>
<sequence length="619" mass="66959">MAASPGSGSANPRKFSEKIALHTQRQAEETRAFEQLMTDLTLSRVQFQKLQQLRLTQYHGGSLPNVSQLRSSASEFQPSFHQADNVRGTRHHGLVERPSRNRFHPLHRRSGDKPGRQFDGSAFGANYSSQPLDESWPRQQPPWKDEKHPGFRLTSALNRTNSDSALHTSALSTKPQDPYGGGGQSAWPAPYMGFCDGENNGHGEVASFPGPLKEENLLNVPKPLPKQLWETKEIQSLSGRPRSCDVGGGNAFPHNGQNLGLSPFLGTLNTGGSLPDLTNLHYSTPLPASLDTTDHHFGSMSVGNSVNNIPAAMTHLGIRSSSGLQSSRSNPSIQATLNKTVLSSSLNNHPQTSVPNASALHPSLRLFSLSNPSLSTTNLSGPSRRRQPPVSPLTLSPGPEAHQGFSRQLSSTSPLAPYPTSQMVSSDRSQLSFLPTEAQAQVSPPPPYPAPQELTQPLLQQPRAPEAPAQQPQAASSLPQSDFQLLPAQGSSLTNFFPDVGFDQQSMRPGPAFPQQVPLVQQGSRELQDSFHLRPSPYSNCGSLPNTILPEDSSTSLFKDLNSALAGLPEVSLNVDTPFPLEEELQIEPLSLDGLNMLSDSSMGLLDPSVEETFRADRL</sequence>
<proteinExistence type="evidence at protein level"/>
<feature type="chain" id="PRO_0000318531" description="CREB-regulated transcription coactivator 3">
    <location>
        <begin position="1"/>
        <end position="619"/>
    </location>
</feature>
<feature type="region of interest" description="Required for interaction with HTLV-1 TAX">
    <location>
        <begin position="1"/>
        <end position="103"/>
    </location>
</feature>
<feature type="region of interest" description="Disordered" evidence="2">
    <location>
        <begin position="103"/>
        <end position="150"/>
    </location>
</feature>
<feature type="region of interest" description="Disordered" evidence="2">
    <location>
        <begin position="165"/>
        <end position="185"/>
    </location>
</feature>
<feature type="region of interest" description="Disordered" evidence="2">
    <location>
        <begin position="375"/>
        <end position="431"/>
    </location>
</feature>
<feature type="region of interest" description="Required for interaction with PPP2CA and PPP2R1A" evidence="1">
    <location>
        <begin position="380"/>
        <end position="401"/>
    </location>
</feature>
<feature type="compositionally biased region" description="Polar residues" evidence="2">
    <location>
        <begin position="165"/>
        <end position="175"/>
    </location>
</feature>
<feature type="compositionally biased region" description="Polar residues" evidence="2">
    <location>
        <begin position="405"/>
        <end position="431"/>
    </location>
</feature>
<feature type="modified residue" description="Phosphoserine" evidence="20 23">
    <location>
        <position position="4"/>
    </location>
</feature>
<feature type="modified residue" description="Phosphoserine" evidence="22 23">
    <location>
        <position position="62"/>
    </location>
</feature>
<feature type="modified residue" description="Phosphothreonine" evidence="1">
    <location>
        <position position="160"/>
    </location>
</feature>
<feature type="modified residue" description="Phosphoserine; by SIK2" evidence="1">
    <location>
        <position position="162"/>
    </location>
</feature>
<feature type="modified residue" description="Phosphoserine" evidence="15">
    <location>
        <position position="273"/>
    </location>
</feature>
<feature type="modified residue" description="Phosphoserine" evidence="21 23">
    <location>
        <position position="329"/>
    </location>
</feature>
<feature type="modified residue" description="Phosphoserine" evidence="23">
    <location>
        <position position="332"/>
    </location>
</feature>
<feature type="modified residue" description="Phosphoserine" evidence="21 23">
    <location>
        <position position="370"/>
    </location>
</feature>
<feature type="modified residue" description="Phosphoserine" evidence="15 19 23">
    <location>
        <position position="391"/>
    </location>
</feature>
<feature type="modified residue" description="Phosphoserine" evidence="23">
    <location>
        <position position="396"/>
    </location>
</feature>
<feature type="modified residue" description="Phosphoserine" evidence="23">
    <location>
        <position position="410"/>
    </location>
</feature>
<feature type="modified residue" description="Phosphoserine" evidence="18 19 21">
    <location>
        <position position="443"/>
    </location>
</feature>
<feature type="cross-link" description="Glycyl lysine isopeptide (Lys-Gly) (interchain with G-Cter in SUMO2)" evidence="24">
    <location>
        <position position="232"/>
    </location>
</feature>
<feature type="splice variant" id="VSP_031220" description="In isoform 3." evidence="16">
    <location>
        <position position="551"/>
    </location>
</feature>
<feature type="sequence variant" id="VAR_038758" description="In dbSNP:rs8033595." evidence="3 4">
    <original>S</original>
    <variation>N</variation>
    <location>
        <position position="72"/>
    </location>
</feature>
<feature type="sequence variant" id="VAR_038759" evidence="8">
    <original>L</original>
    <variation>S</variation>
    <location>
        <position position="346"/>
    </location>
</feature>
<feature type="mutagenesis site" description="Translocates to the cytoplasm. Represses basal TORC3 activity towards CREB." evidence="6">
    <original>Y</original>
    <variation>F</variation>
    <location>
        <position position="282"/>
    </location>
</feature>
<feature type="sequence conflict" description="In Ref. 4; BAB15160." evidence="17" ref="4">
    <original>P</original>
    <variation>S</variation>
    <location>
        <position position="545"/>
    </location>
</feature>
<feature type="sequence conflict" description="In Ref. 2; BAC03424." evidence="17" ref="2">
    <original>A</original>
    <variation>T</variation>
    <location>
        <position position="616"/>
    </location>
</feature>
<gene>
    <name type="primary">CRTC3</name>
    <name type="synonym">TORC3</name>
</gene>
<name>CRTC3_HUMAN</name>
<organism>
    <name type="scientific">Homo sapiens</name>
    <name type="common">Human</name>
    <dbReference type="NCBI Taxonomy" id="9606"/>
    <lineage>
        <taxon>Eukaryota</taxon>
        <taxon>Metazoa</taxon>
        <taxon>Chordata</taxon>
        <taxon>Craniata</taxon>
        <taxon>Vertebrata</taxon>
        <taxon>Euteleostomi</taxon>
        <taxon>Mammalia</taxon>
        <taxon>Eutheria</taxon>
        <taxon>Euarchontoglires</taxon>
        <taxon>Primates</taxon>
        <taxon>Haplorrhini</taxon>
        <taxon>Catarrhini</taxon>
        <taxon>Hominidae</taxon>
        <taxon>Homo</taxon>
    </lineage>
</organism>
<accession>Q6UUV7</accession>
<accession>Q6DK61</accession>
<accession>Q6DK62</accession>
<accession>Q8NF38</accession>
<accession>Q9H6U2</accession>
<reference key="1">
    <citation type="journal article" date="2003" name="Proc. Natl. Acad. Sci. U.S.A.">
        <title>Identification of a family of cAMP response element-binding protein coactivators by genome-scale functional analysis in mammalian cells.</title>
        <authorList>
            <person name="Iourgenko V."/>
            <person name="Zhang W."/>
            <person name="Mickanin C."/>
            <person name="Daly I."/>
            <person name="Jiang C."/>
            <person name="Hexham J.M."/>
            <person name="Orth A.P."/>
            <person name="Miraglia L."/>
            <person name="Meltzer J."/>
            <person name="Garza D."/>
            <person name="Chirn G.-W."/>
            <person name="McWhinnie E."/>
            <person name="Cohen D."/>
            <person name="Skelton J."/>
            <person name="Terry R."/>
            <person name="Yu Y."/>
            <person name="Bodian D."/>
            <person name="Buxton F.P."/>
            <person name="Zhu J."/>
            <person name="Song C."/>
            <person name="Labow M.A."/>
        </authorList>
    </citation>
    <scope>NUCLEOTIDE SEQUENCE [MRNA] (ISOFORM 1)</scope>
    <scope>FUNCTION</scope>
    <scope>SUBCELLULAR LOCATION</scope>
    <scope>INTERACTION WITH CREB1</scope>
    <scope>VARIANT ASN-72</scope>
</reference>
<reference key="2">
    <citation type="journal article" date="2003" name="DNA Res.">
        <title>Characterization of long cDNA clones from human adult spleen. II. The complete sequences of 81 cDNA clones.</title>
        <authorList>
            <person name="Jikuya H."/>
            <person name="Takano J."/>
            <person name="Kikuno R."/>
            <person name="Hirosawa M."/>
            <person name="Nagase T."/>
            <person name="Nomura N."/>
            <person name="Ohara O."/>
        </authorList>
    </citation>
    <scope>NUCLEOTIDE SEQUENCE [LARGE SCALE MRNA] (ISOFORM 3)</scope>
    <scope>VARIANT ASN-72</scope>
    <source>
        <tissue>Spleen</tissue>
    </source>
</reference>
<reference key="3">
    <citation type="journal article" date="2006" name="Nature">
        <title>Analysis of the DNA sequence and duplication history of human chromosome 15.</title>
        <authorList>
            <person name="Zody M.C."/>
            <person name="Garber M."/>
            <person name="Sharpe T."/>
            <person name="Young S.K."/>
            <person name="Rowen L."/>
            <person name="O'Neill K."/>
            <person name="Whittaker C.A."/>
            <person name="Kamal M."/>
            <person name="Chang J.L."/>
            <person name="Cuomo C.A."/>
            <person name="Dewar K."/>
            <person name="FitzGerald M.G."/>
            <person name="Kodira C.D."/>
            <person name="Madan A."/>
            <person name="Qin S."/>
            <person name="Yang X."/>
            <person name="Abbasi N."/>
            <person name="Abouelleil A."/>
            <person name="Arachchi H.M."/>
            <person name="Baradarani L."/>
            <person name="Birditt B."/>
            <person name="Bloom S."/>
            <person name="Bloom T."/>
            <person name="Borowsky M.L."/>
            <person name="Burke J."/>
            <person name="Butler J."/>
            <person name="Cook A."/>
            <person name="DeArellano K."/>
            <person name="DeCaprio D."/>
            <person name="Dorris L. III"/>
            <person name="Dors M."/>
            <person name="Eichler E.E."/>
            <person name="Engels R."/>
            <person name="Fahey J."/>
            <person name="Fleetwood P."/>
            <person name="Friedman C."/>
            <person name="Gearin G."/>
            <person name="Hall J.L."/>
            <person name="Hensley G."/>
            <person name="Johnson E."/>
            <person name="Jones C."/>
            <person name="Kamat A."/>
            <person name="Kaur A."/>
            <person name="Locke D.P."/>
            <person name="Madan A."/>
            <person name="Munson G."/>
            <person name="Jaffe D.B."/>
            <person name="Lui A."/>
            <person name="Macdonald P."/>
            <person name="Mauceli E."/>
            <person name="Naylor J.W."/>
            <person name="Nesbitt R."/>
            <person name="Nicol R."/>
            <person name="O'Leary S.B."/>
            <person name="Ratcliffe A."/>
            <person name="Rounsley S."/>
            <person name="She X."/>
            <person name="Sneddon K.M.B."/>
            <person name="Stewart S."/>
            <person name="Sougnez C."/>
            <person name="Stone S.M."/>
            <person name="Topham K."/>
            <person name="Vincent D."/>
            <person name="Wang S."/>
            <person name="Zimmer A.R."/>
            <person name="Birren B.W."/>
            <person name="Hood L."/>
            <person name="Lander E.S."/>
            <person name="Nusbaum C."/>
        </authorList>
    </citation>
    <scope>NUCLEOTIDE SEQUENCE [LARGE SCALE GENOMIC DNA]</scope>
</reference>
<reference key="4">
    <citation type="journal article" date="2004" name="Nat. Genet.">
        <title>Complete sequencing and characterization of 21,243 full-length human cDNAs.</title>
        <authorList>
            <person name="Ota T."/>
            <person name="Suzuki Y."/>
            <person name="Nishikawa T."/>
            <person name="Otsuki T."/>
            <person name="Sugiyama T."/>
            <person name="Irie R."/>
            <person name="Wakamatsu A."/>
            <person name="Hayashi K."/>
            <person name="Sato H."/>
            <person name="Nagai K."/>
            <person name="Kimura K."/>
            <person name="Makita H."/>
            <person name="Sekine M."/>
            <person name="Obayashi M."/>
            <person name="Nishi T."/>
            <person name="Shibahara T."/>
            <person name="Tanaka T."/>
            <person name="Ishii S."/>
            <person name="Yamamoto J."/>
            <person name="Saito K."/>
            <person name="Kawai Y."/>
            <person name="Isono Y."/>
            <person name="Nakamura Y."/>
            <person name="Nagahari K."/>
            <person name="Murakami K."/>
            <person name="Yasuda T."/>
            <person name="Iwayanagi T."/>
            <person name="Wagatsuma M."/>
            <person name="Shiratori A."/>
            <person name="Sudo H."/>
            <person name="Hosoiri T."/>
            <person name="Kaku Y."/>
            <person name="Kodaira H."/>
            <person name="Kondo H."/>
            <person name="Sugawara M."/>
            <person name="Takahashi M."/>
            <person name="Kanda K."/>
            <person name="Yokoi T."/>
            <person name="Furuya T."/>
            <person name="Kikkawa E."/>
            <person name="Omura Y."/>
            <person name="Abe K."/>
            <person name="Kamihara K."/>
            <person name="Katsuta N."/>
            <person name="Sato K."/>
            <person name="Tanikawa M."/>
            <person name="Yamazaki M."/>
            <person name="Ninomiya K."/>
            <person name="Ishibashi T."/>
            <person name="Yamashita H."/>
            <person name="Murakawa K."/>
            <person name="Fujimori K."/>
            <person name="Tanai H."/>
            <person name="Kimata M."/>
            <person name="Watanabe M."/>
            <person name="Hiraoka S."/>
            <person name="Chiba Y."/>
            <person name="Ishida S."/>
            <person name="Ono Y."/>
            <person name="Takiguchi S."/>
            <person name="Watanabe S."/>
            <person name="Yosida M."/>
            <person name="Hotuta T."/>
            <person name="Kusano J."/>
            <person name="Kanehori K."/>
            <person name="Takahashi-Fujii A."/>
            <person name="Hara H."/>
            <person name="Tanase T.-O."/>
            <person name="Nomura Y."/>
            <person name="Togiya S."/>
            <person name="Komai F."/>
            <person name="Hara R."/>
            <person name="Takeuchi K."/>
            <person name="Arita M."/>
            <person name="Imose N."/>
            <person name="Musashino K."/>
            <person name="Yuuki H."/>
            <person name="Oshima A."/>
            <person name="Sasaki N."/>
            <person name="Aotsuka S."/>
            <person name="Yoshikawa Y."/>
            <person name="Matsunawa H."/>
            <person name="Ichihara T."/>
            <person name="Shiohata N."/>
            <person name="Sano S."/>
            <person name="Moriya S."/>
            <person name="Momiyama H."/>
            <person name="Satoh N."/>
            <person name="Takami S."/>
            <person name="Terashima Y."/>
            <person name="Suzuki O."/>
            <person name="Nakagawa S."/>
            <person name="Senoh A."/>
            <person name="Mizoguchi H."/>
            <person name="Goto Y."/>
            <person name="Shimizu F."/>
            <person name="Wakebe H."/>
            <person name="Hishigaki H."/>
            <person name="Watanabe T."/>
            <person name="Sugiyama A."/>
            <person name="Takemoto M."/>
            <person name="Kawakami B."/>
            <person name="Yamazaki M."/>
            <person name="Watanabe K."/>
            <person name="Kumagai A."/>
            <person name="Itakura S."/>
            <person name="Fukuzumi Y."/>
            <person name="Fujimori Y."/>
            <person name="Komiyama M."/>
            <person name="Tashiro H."/>
            <person name="Tanigami A."/>
            <person name="Fujiwara T."/>
            <person name="Ono T."/>
            <person name="Yamada K."/>
            <person name="Fujii Y."/>
            <person name="Ozaki K."/>
            <person name="Hirao M."/>
            <person name="Ohmori Y."/>
            <person name="Kawabata A."/>
            <person name="Hikiji T."/>
            <person name="Kobatake N."/>
            <person name="Inagaki H."/>
            <person name="Ikema Y."/>
            <person name="Okamoto S."/>
            <person name="Okitani R."/>
            <person name="Kawakami T."/>
            <person name="Noguchi S."/>
            <person name="Itoh T."/>
            <person name="Shigeta K."/>
            <person name="Senba T."/>
            <person name="Matsumura K."/>
            <person name="Nakajima Y."/>
            <person name="Mizuno T."/>
            <person name="Morinaga M."/>
            <person name="Sasaki M."/>
            <person name="Togashi T."/>
            <person name="Oyama M."/>
            <person name="Hata H."/>
            <person name="Watanabe M."/>
            <person name="Komatsu T."/>
            <person name="Mizushima-Sugano J."/>
            <person name="Satoh T."/>
            <person name="Shirai Y."/>
            <person name="Takahashi Y."/>
            <person name="Nakagawa K."/>
            <person name="Okumura K."/>
            <person name="Nagase T."/>
            <person name="Nomura N."/>
            <person name="Kikuchi H."/>
            <person name="Masuho Y."/>
            <person name="Yamashita R."/>
            <person name="Nakai K."/>
            <person name="Yada T."/>
            <person name="Nakamura Y."/>
            <person name="Ohara O."/>
            <person name="Isogai T."/>
            <person name="Sugano S."/>
        </authorList>
    </citation>
    <scope>NUCLEOTIDE SEQUENCE [LARGE SCALE MRNA] OF 217-619 (ISOFORM 1)</scope>
    <source>
        <tissue>Hepatoma</tissue>
    </source>
</reference>
<reference key="5">
    <citation type="journal article" date="2004" name="Genome Res.">
        <title>The status, quality, and expansion of the NIH full-length cDNA project: the Mammalian Gene Collection (MGC).</title>
        <authorList>
            <consortium name="The MGC Project Team"/>
        </authorList>
    </citation>
    <scope>NUCLEOTIDE SEQUENCE [LARGE SCALE MRNA] OF 292-619 (ISOFORM 1)</scope>
    <scope>VARIANT SER-346</scope>
    <source>
        <tissue>Brain</tissue>
    </source>
</reference>
<reference key="6">
    <citation type="journal article" date="2003" name="Mol. Cell">
        <title>TORCs: transducers of regulated CREB activity.</title>
        <authorList>
            <person name="Conkright M.D."/>
            <person name="Canettieri G."/>
            <person name="Screaton R."/>
            <person name="Guzman E."/>
            <person name="Miraglia L."/>
            <person name="Hogenesch J.B."/>
            <person name="Montminy M."/>
        </authorList>
    </citation>
    <scope>TISSUE SPECIFICITY</scope>
</reference>
<reference key="7">
    <citation type="journal article" date="2004" name="Cell">
        <title>The CREB coactivator TORC2 functions as a calcium- and cAMP-sensitive coincidence detector.</title>
        <authorList>
            <person name="Screaton R.A."/>
            <person name="Conkright M.D."/>
            <person name="Katoh Y."/>
            <person name="Best J.L."/>
            <person name="Canettieri G."/>
            <person name="Jeffries S."/>
            <person name="Guzman E."/>
            <person name="Niessen S."/>
            <person name="Yates J.R. III"/>
            <person name="Takemori H."/>
            <person name="Okamoto M."/>
            <person name="Montminy M."/>
        </authorList>
    </citation>
    <scope>SUBCELLULAR LOCATION</scope>
    <scope>FUNCTION</scope>
    <scope>MUTAGENESIS OF TYR-282</scope>
</reference>
<reference key="8">
    <citation type="journal article" date="2004" name="J. Biol. Chem.">
        <title>Enhanced activation of tax-dependent transcription of human T-cell leukemia virus type I (HTLV-I) long terminal repeat by TORC3.</title>
        <authorList>
            <person name="Koga H."/>
            <person name="Ohshima T."/>
            <person name="Shimotohno K."/>
        </authorList>
    </citation>
    <scope>INTERACTION WITH HTLV-1 TAX (MICROBIAL INFECTION)</scope>
    <scope>FUNCTION</scope>
</reference>
<reference key="9">
    <citation type="journal article" date="2004" name="Curr. Biol.">
        <title>Activation of cAMP response element-mediated gene expression by regulated nuclear transport of TORC proteins.</title>
        <authorList>
            <person name="Bittinger M.A."/>
            <person name="McWhinnie E."/>
            <person name="Meltzer J."/>
            <person name="Iourgenko V."/>
            <person name="Latario B."/>
            <person name="Liu X."/>
            <person name="Chen C.H."/>
            <person name="Song C."/>
            <person name="Garza D."/>
            <person name="Labow M."/>
        </authorList>
    </citation>
    <scope>SUBCELLULAR LOCATION</scope>
    <scope>PHOSPHORYLATION</scope>
</reference>
<reference key="10">
    <citation type="journal article" date="2006" name="Cell">
        <title>Global, in vivo, and site-specific phosphorylation dynamics in signaling networks.</title>
        <authorList>
            <person name="Olsen J.V."/>
            <person name="Blagoev B."/>
            <person name="Gnad F."/>
            <person name="Macek B."/>
            <person name="Kumar C."/>
            <person name="Mortensen P."/>
            <person name="Mann M."/>
        </authorList>
    </citation>
    <scope>IDENTIFICATION BY MASS SPECTROMETRY [LARGE SCALE ANALYSIS]</scope>
    <source>
        <tissue>Cervix carcinoma</tissue>
    </source>
</reference>
<reference key="11">
    <citation type="journal article" date="2006" name="FEBS J.">
        <title>Silencing the constitutive active transcription factor CREB by the LKB1-SIK signaling cascade.</title>
        <authorList>
            <person name="Katoh Y."/>
            <person name="Takemori H."/>
            <person name="Lin X.-Z."/>
            <person name="Tamura M."/>
            <person name="Muraoka M."/>
            <person name="Satoh T."/>
            <person name="Tsuchiya Y."/>
            <person name="Min L."/>
            <person name="Doi J."/>
            <person name="Miyauchi A."/>
            <person name="Witters L.A."/>
            <person name="Nakamura H."/>
            <person name="Okamoto M."/>
        </authorList>
    </citation>
    <scope>FUNCTION</scope>
    <scope>SUBCELLULAR LOCATION</scope>
    <scope>PHOSPHORYLATION</scope>
</reference>
<reference key="12">
    <citation type="journal article" date="2006" name="J. Virol.">
        <title>TORC1 and TORC2 coactivators are required for tax activation of the human T-cell leukemia virus type 1 long terminal repeats.</title>
        <authorList>
            <person name="Siu Y.-T."/>
            <person name="Chin K.-T."/>
            <person name="Siu K.-L."/>
            <person name="Yee Wai Choy E."/>
            <person name="Jeang K.-T."/>
            <person name="Jin D.-Y."/>
        </authorList>
    </citation>
    <scope>INTERACTION WITH HTLV-1 TAX (MICROBIAL INFECTION)</scope>
</reference>
<reference key="13">
    <citation type="journal article" date="2006" name="Proc. Natl. Acad. Sci. U.S.A.">
        <title>Transducer of regulated CREB-binding proteins (TORCs) induce PGC-1alpha transcription and mitochondrial biogenesis in muscle cells.</title>
        <authorList>
            <person name="Wu Z."/>
            <person name="Huang X."/>
            <person name="Feng Y."/>
            <person name="Handschin C."/>
            <person name="Feng Y."/>
            <person name="Gullicksen P.S."/>
            <person name="Bare O."/>
            <person name="Labow M."/>
            <person name="Spiegelman B."/>
            <person name="Stevenson S.C."/>
        </authorList>
    </citation>
    <scope>FUNCTION</scope>
    <scope>TISSUE SPECIFICITY</scope>
</reference>
<reference key="14">
    <citation type="journal article" date="2007" name="J. Biol. Chem.">
        <title>BCL3 acts as a negative regulator of transcription from the human T-cell leukemia virus type 1 long terminal repeat through interactions with TORC3.</title>
        <authorList>
            <person name="Hishiki T."/>
            <person name="Ohshima T."/>
            <person name="Ego T."/>
            <person name="Shimotohno K."/>
        </authorList>
    </citation>
    <scope>INTERACTION WITH BCL3 IN BCL3/TORC3/CREB1 COMPLEX</scope>
    <scope>FUNCTION</scope>
</reference>
<reference key="15">
    <citation type="journal article" date="2007" name="Mol. Cell. Endocrinol.">
        <title>Dephosphorylation of TORC initiates expression of the StAR gene.</title>
        <authorList>
            <person name="Takemori H."/>
            <person name="Kanematsu M."/>
            <person name="Kajimura J."/>
            <person name="Hatano O."/>
            <person name="Katoh Y."/>
            <person name="Lin X.-Z."/>
            <person name="Min L."/>
            <person name="Yamazaki T."/>
            <person name="Doi J."/>
            <person name="Okamoto M."/>
        </authorList>
    </citation>
    <scope>FUNCTION</scope>
</reference>
<reference key="16">
    <citation type="journal article" date="2008" name="J. Proteome Res.">
        <title>Combining protein-based IMAC, peptide-based IMAC, and MudPIT for efficient phosphoproteomic analysis.</title>
        <authorList>
            <person name="Cantin G.T."/>
            <person name="Yi W."/>
            <person name="Lu B."/>
            <person name="Park S.K."/>
            <person name="Xu T."/>
            <person name="Lee J.-D."/>
            <person name="Yates J.R. III"/>
        </authorList>
    </citation>
    <scope>PHOSPHORYLATION [LARGE SCALE ANALYSIS] AT SER-443</scope>
    <scope>IDENTIFICATION BY MASS SPECTROMETRY [LARGE SCALE ANALYSIS]</scope>
    <source>
        <tissue>Cervix carcinoma</tissue>
    </source>
</reference>
<reference key="17">
    <citation type="journal article" date="2008" name="Mol. Cell">
        <title>Kinase-selective enrichment enables quantitative phosphoproteomics of the kinome across the cell cycle.</title>
        <authorList>
            <person name="Daub H."/>
            <person name="Olsen J.V."/>
            <person name="Bairlein M."/>
            <person name="Gnad F."/>
            <person name="Oppermann F.S."/>
            <person name="Korner R."/>
            <person name="Greff Z."/>
            <person name="Keri G."/>
            <person name="Stemmann O."/>
            <person name="Mann M."/>
        </authorList>
    </citation>
    <scope>PHOSPHORYLATION [LARGE SCALE ANALYSIS] AT SER-4</scope>
    <scope>IDENTIFICATION BY MASS SPECTROMETRY [LARGE SCALE ANALYSIS]</scope>
    <source>
        <tissue>Cervix carcinoma</tissue>
    </source>
</reference>
<reference key="18">
    <citation type="journal article" date="2008" name="Proc. Natl. Acad. Sci. U.S.A.">
        <title>A quantitative atlas of mitotic phosphorylation.</title>
        <authorList>
            <person name="Dephoure N."/>
            <person name="Zhou C."/>
            <person name="Villen J."/>
            <person name="Beausoleil S.A."/>
            <person name="Bakalarski C.E."/>
            <person name="Elledge S.J."/>
            <person name="Gygi S.P."/>
        </authorList>
    </citation>
    <scope>PHOSPHORYLATION [LARGE SCALE ANALYSIS] AT SER-391 AND SER-443</scope>
    <scope>IDENTIFICATION BY MASS SPECTROMETRY [LARGE SCALE ANALYSIS]</scope>
    <source>
        <tissue>Cervix carcinoma</tissue>
    </source>
</reference>
<reference key="19">
    <citation type="journal article" date="2009" name="Sci. Signal.">
        <title>Quantitative phosphoproteomic analysis of T cell receptor signaling reveals system-wide modulation of protein-protein interactions.</title>
        <authorList>
            <person name="Mayya V."/>
            <person name="Lundgren D.H."/>
            <person name="Hwang S.-I."/>
            <person name="Rezaul K."/>
            <person name="Wu L."/>
            <person name="Eng J.K."/>
            <person name="Rodionov V."/>
            <person name="Han D.K."/>
        </authorList>
    </citation>
    <scope>PHOSPHORYLATION [LARGE SCALE ANALYSIS] AT SER-329; SER-370 AND SER-443</scope>
    <scope>IDENTIFICATION BY MASS SPECTROMETRY [LARGE SCALE ANALYSIS]</scope>
    <source>
        <tissue>Leukemic T-cell</tissue>
    </source>
</reference>
<reference key="20">
    <citation type="journal article" date="2010" name="Sci. Signal.">
        <title>Quantitative phosphoproteomics reveals widespread full phosphorylation site occupancy during mitosis.</title>
        <authorList>
            <person name="Olsen J.V."/>
            <person name="Vermeulen M."/>
            <person name="Santamaria A."/>
            <person name="Kumar C."/>
            <person name="Miller M.L."/>
            <person name="Jensen L.J."/>
            <person name="Gnad F."/>
            <person name="Cox J."/>
            <person name="Jensen T.S."/>
            <person name="Nigg E.A."/>
            <person name="Brunak S."/>
            <person name="Mann M."/>
        </authorList>
    </citation>
    <scope>PHOSPHORYLATION [LARGE SCALE ANALYSIS] AT SER-62</scope>
    <scope>IDENTIFICATION BY MASS SPECTROMETRY [LARGE SCALE ANALYSIS]</scope>
    <source>
        <tissue>Cervix carcinoma</tissue>
    </source>
</reference>
<reference key="21">
    <citation type="journal article" date="2013" name="J. Proteome Res.">
        <title>Toward a comprehensive characterization of a human cancer cell phosphoproteome.</title>
        <authorList>
            <person name="Zhou H."/>
            <person name="Di Palma S."/>
            <person name="Preisinger C."/>
            <person name="Peng M."/>
            <person name="Polat A.N."/>
            <person name="Heck A.J."/>
            <person name="Mohammed S."/>
        </authorList>
    </citation>
    <scope>PHOSPHORYLATION [LARGE SCALE ANALYSIS] AT SER-4; SER-62; SER-329; SER-332; SER-370; SER-391; SER-396 AND SER-410</scope>
    <scope>IDENTIFICATION BY MASS SPECTROMETRY [LARGE SCALE ANALYSIS]</scope>
    <source>
        <tissue>Cervix carcinoma</tissue>
        <tissue>Erythroleukemia</tissue>
    </source>
</reference>
<reference key="22">
    <citation type="journal article" date="2017" name="Nat. Struct. Mol. Biol.">
        <title>Site-specific mapping of the human SUMO proteome reveals co-modification with phosphorylation.</title>
        <authorList>
            <person name="Hendriks I.A."/>
            <person name="Lyon D."/>
            <person name="Young C."/>
            <person name="Jensen L.J."/>
            <person name="Vertegaal A.C."/>
            <person name="Nielsen M.L."/>
        </authorList>
    </citation>
    <scope>SUMOYLATION [LARGE SCALE ANALYSIS] AT LYS-232</scope>
    <scope>IDENTIFICATION BY MASS SPECTROMETRY [LARGE SCALE ANALYSIS]</scope>
</reference>
<reference key="23">
    <citation type="journal article" date="2018" name="IScience">
        <title>Mitogenic Signals Stimulate the CREB Coactivator CRTC3 through PP2A Recruitment.</title>
        <authorList>
            <person name="Sonntag T."/>
            <person name="Ostojic J."/>
            <person name="Vaughan J.M."/>
            <person name="Moresco J.J."/>
            <person name="Yoon Y.S."/>
            <person name="Yates J.R. III"/>
            <person name="Montminy M."/>
        </authorList>
    </citation>
    <scope>INTERACTION WITH YWHAE; PPP2CA; PPP2R1A AND PPP2R2A</scope>
    <scope>SUBCELLULAR LOCATION</scope>
    <scope>PHOSPHORYLATION AT SER-273 AND SER-391</scope>
</reference>
<dbReference type="EMBL" id="AY360173">
    <property type="protein sequence ID" value="AAQ98858.1"/>
    <property type="molecule type" value="mRNA"/>
</dbReference>
<dbReference type="EMBL" id="AK090443">
    <property type="protein sequence ID" value="BAC03424.1"/>
    <property type="status" value="ALT_FRAME"/>
    <property type="molecule type" value="mRNA"/>
</dbReference>
<dbReference type="EMBL" id="AC021422">
    <property type="status" value="NOT_ANNOTATED_CDS"/>
    <property type="molecule type" value="Genomic_DNA"/>
</dbReference>
<dbReference type="EMBL" id="AC103739">
    <property type="status" value="NOT_ANNOTATED_CDS"/>
    <property type="molecule type" value="Genomic_DNA"/>
</dbReference>
<dbReference type="EMBL" id="AK025521">
    <property type="protein sequence ID" value="BAB15160.1"/>
    <property type="molecule type" value="mRNA"/>
</dbReference>
<dbReference type="EMBL" id="BC074730">
    <property type="protein sequence ID" value="AAH74730.2"/>
    <property type="molecule type" value="mRNA"/>
</dbReference>
<dbReference type="EMBL" id="BC074731">
    <property type="protein sequence ID" value="AAH74731.3"/>
    <property type="molecule type" value="mRNA"/>
</dbReference>
<dbReference type="CCDS" id="CCDS32331.1">
    <molecule id="Q6UUV7-1"/>
</dbReference>
<dbReference type="CCDS" id="CCDS45348.1">
    <molecule id="Q6UUV7-3"/>
</dbReference>
<dbReference type="RefSeq" id="NP_001036039.1">
    <molecule id="Q6UUV7-3"/>
    <property type="nucleotide sequence ID" value="NM_001042574.3"/>
</dbReference>
<dbReference type="RefSeq" id="NP_073606.3">
    <molecule id="Q6UUV7-1"/>
    <property type="nucleotide sequence ID" value="NM_022769.5"/>
</dbReference>
<dbReference type="SMR" id="Q6UUV7"/>
<dbReference type="BioGRID" id="122294">
    <property type="interactions" value="65"/>
</dbReference>
<dbReference type="DIP" id="DIP-59211N"/>
<dbReference type="FunCoup" id="Q6UUV7">
    <property type="interactions" value="3317"/>
</dbReference>
<dbReference type="IntAct" id="Q6UUV7">
    <property type="interactions" value="37"/>
</dbReference>
<dbReference type="STRING" id="9606.ENSP00000268184"/>
<dbReference type="GlyCosmos" id="Q6UUV7">
    <property type="glycosylation" value="10 sites, 2 glycans"/>
</dbReference>
<dbReference type="GlyGen" id="Q6UUV7">
    <property type="glycosylation" value="13 sites, 1 N-linked glycan (1 site), 2 O-linked glycans (12 sites)"/>
</dbReference>
<dbReference type="iPTMnet" id="Q6UUV7"/>
<dbReference type="PhosphoSitePlus" id="Q6UUV7"/>
<dbReference type="BioMuta" id="CRTC3"/>
<dbReference type="DMDM" id="167009130"/>
<dbReference type="jPOST" id="Q6UUV7"/>
<dbReference type="MassIVE" id="Q6UUV7"/>
<dbReference type="PaxDb" id="9606-ENSP00000268184"/>
<dbReference type="PeptideAtlas" id="Q6UUV7"/>
<dbReference type="ProteomicsDB" id="67424">
    <molecule id="Q6UUV7-1"/>
</dbReference>
<dbReference type="ProteomicsDB" id="67425">
    <molecule id="Q6UUV7-3"/>
</dbReference>
<dbReference type="Pumba" id="Q6UUV7"/>
<dbReference type="Antibodypedia" id="37539">
    <property type="antibodies" value="150 antibodies from 28 providers"/>
</dbReference>
<dbReference type="DNASU" id="64784"/>
<dbReference type="Ensembl" id="ENST00000268184.11">
    <molecule id="Q6UUV7-1"/>
    <property type="protein sequence ID" value="ENSP00000268184.6"/>
    <property type="gene ID" value="ENSG00000140577.17"/>
</dbReference>
<dbReference type="Ensembl" id="ENST00000420329.6">
    <molecule id="Q6UUV7-3"/>
    <property type="protein sequence ID" value="ENSP00000416573.2"/>
    <property type="gene ID" value="ENSG00000140577.17"/>
</dbReference>
<dbReference type="Ensembl" id="ENST00000691029.1">
    <molecule id="Q6UUV7-1"/>
    <property type="protein sequence ID" value="ENSP00000510507.1"/>
    <property type="gene ID" value="ENSG00000140577.17"/>
</dbReference>
<dbReference type="GeneID" id="64784"/>
<dbReference type="KEGG" id="hsa:64784"/>
<dbReference type="MANE-Select" id="ENST00000268184.11">
    <property type="protein sequence ID" value="ENSP00000268184.6"/>
    <property type="RefSeq nucleotide sequence ID" value="NM_022769.5"/>
    <property type="RefSeq protein sequence ID" value="NP_073606.3"/>
</dbReference>
<dbReference type="UCSC" id="uc002bpo.5">
    <molecule id="Q6UUV7-1"/>
    <property type="organism name" value="human"/>
</dbReference>
<dbReference type="AGR" id="HGNC:26148"/>
<dbReference type="CTD" id="64784"/>
<dbReference type="DisGeNET" id="64784"/>
<dbReference type="GeneCards" id="CRTC3"/>
<dbReference type="HGNC" id="HGNC:26148">
    <property type="gene designation" value="CRTC3"/>
</dbReference>
<dbReference type="HPA" id="ENSG00000140577">
    <property type="expression patterns" value="Low tissue specificity"/>
</dbReference>
<dbReference type="MIM" id="608986">
    <property type="type" value="gene"/>
</dbReference>
<dbReference type="neXtProt" id="NX_Q6UUV7"/>
<dbReference type="OpenTargets" id="ENSG00000140577"/>
<dbReference type="PharmGKB" id="PA142672074"/>
<dbReference type="VEuPathDB" id="HostDB:ENSG00000140577"/>
<dbReference type="eggNOG" id="ENOG502QV9G">
    <property type="taxonomic scope" value="Eukaryota"/>
</dbReference>
<dbReference type="GeneTree" id="ENSGT00390000010652"/>
<dbReference type="HOGENOM" id="CLU_019357_3_0_1"/>
<dbReference type="InParanoid" id="Q6UUV7"/>
<dbReference type="OMA" id="LPHNGQN"/>
<dbReference type="OrthoDB" id="8947034at2759"/>
<dbReference type="PAN-GO" id="Q6UUV7">
    <property type="GO annotations" value="5 GO annotations based on evolutionary models"/>
</dbReference>
<dbReference type="PhylomeDB" id="Q6UUV7"/>
<dbReference type="TreeFam" id="TF321571"/>
<dbReference type="PathwayCommons" id="Q6UUV7"/>
<dbReference type="Reactome" id="R-HSA-2151201">
    <property type="pathway name" value="Transcriptional activation of mitochondrial biogenesis"/>
</dbReference>
<dbReference type="Reactome" id="R-HSA-400253">
    <property type="pathway name" value="Circadian Clock"/>
</dbReference>
<dbReference type="Reactome" id="R-HSA-9707616">
    <property type="pathway name" value="Heme signaling"/>
</dbReference>
<dbReference type="SignaLink" id="Q6UUV7"/>
<dbReference type="SIGNOR" id="Q6UUV7"/>
<dbReference type="BioGRID-ORCS" id="64784">
    <property type="hits" value="33 hits in 1169 CRISPR screens"/>
</dbReference>
<dbReference type="ChiTaRS" id="CRTC3">
    <property type="organism name" value="human"/>
</dbReference>
<dbReference type="GeneWiki" id="CRTC3"/>
<dbReference type="GenomeRNAi" id="64784"/>
<dbReference type="Pharos" id="Q6UUV7">
    <property type="development level" value="Tbio"/>
</dbReference>
<dbReference type="PRO" id="PR:Q6UUV7"/>
<dbReference type="Proteomes" id="UP000005640">
    <property type="component" value="Chromosome 15"/>
</dbReference>
<dbReference type="RNAct" id="Q6UUV7">
    <property type="molecule type" value="protein"/>
</dbReference>
<dbReference type="Bgee" id="ENSG00000140577">
    <property type="expression patterns" value="Expressed in endothelial cell and 204 other cell types or tissues"/>
</dbReference>
<dbReference type="ExpressionAtlas" id="Q6UUV7">
    <property type="expression patterns" value="baseline and differential"/>
</dbReference>
<dbReference type="GO" id="GO:0005737">
    <property type="term" value="C:cytoplasm"/>
    <property type="evidence" value="ECO:0000318"/>
    <property type="project" value="GO_Central"/>
</dbReference>
<dbReference type="GO" id="GO:0005829">
    <property type="term" value="C:cytosol"/>
    <property type="evidence" value="ECO:0000314"/>
    <property type="project" value="HPA"/>
</dbReference>
<dbReference type="GO" id="GO:0005654">
    <property type="term" value="C:nucleoplasm"/>
    <property type="evidence" value="ECO:0000314"/>
    <property type="project" value="HPA"/>
</dbReference>
<dbReference type="GO" id="GO:0005634">
    <property type="term" value="C:nucleus"/>
    <property type="evidence" value="ECO:0000318"/>
    <property type="project" value="GO_Central"/>
</dbReference>
<dbReference type="GO" id="GO:0008140">
    <property type="term" value="F:cAMP response element binding protein binding"/>
    <property type="evidence" value="ECO:0000318"/>
    <property type="project" value="GO_Central"/>
</dbReference>
<dbReference type="GO" id="GO:0003713">
    <property type="term" value="F:transcription coactivator activity"/>
    <property type="evidence" value="ECO:0000318"/>
    <property type="project" value="GO_Central"/>
</dbReference>
<dbReference type="GO" id="GO:0071320">
    <property type="term" value="P:cellular response to cAMP"/>
    <property type="evidence" value="ECO:0000318"/>
    <property type="project" value="GO_Central"/>
</dbReference>
<dbReference type="GO" id="GO:0097009">
    <property type="term" value="P:energy homeostasis"/>
    <property type="evidence" value="ECO:0007669"/>
    <property type="project" value="Ensembl"/>
</dbReference>
<dbReference type="GO" id="GO:0016042">
    <property type="term" value="P:lipid catabolic process"/>
    <property type="evidence" value="ECO:0007669"/>
    <property type="project" value="Ensembl"/>
</dbReference>
<dbReference type="GO" id="GO:0042116">
    <property type="term" value="P:macrophage activation"/>
    <property type="evidence" value="ECO:0000315"/>
    <property type="project" value="CACAO"/>
</dbReference>
<dbReference type="GO" id="GO:0071878">
    <property type="term" value="P:negative regulation of adenylate cyclase-activating adrenergic receptor signaling pathway"/>
    <property type="evidence" value="ECO:0000318"/>
    <property type="project" value="GO_Central"/>
</dbReference>
<dbReference type="GO" id="GO:0050995">
    <property type="term" value="P:negative regulation of lipid catabolic process"/>
    <property type="evidence" value="ECO:0007669"/>
    <property type="project" value="Ensembl"/>
</dbReference>
<dbReference type="GO" id="GO:0045944">
    <property type="term" value="P:positive regulation of transcription by RNA polymerase II"/>
    <property type="evidence" value="ECO:0000318"/>
    <property type="project" value="GO_Central"/>
</dbReference>
<dbReference type="GO" id="GO:0051289">
    <property type="term" value="P:protein homotetramerization"/>
    <property type="evidence" value="ECO:0007669"/>
    <property type="project" value="InterPro"/>
</dbReference>
<dbReference type="InterPro" id="IPR024786">
    <property type="entry name" value="TORC"/>
</dbReference>
<dbReference type="InterPro" id="IPR024785">
    <property type="entry name" value="TORC_C"/>
</dbReference>
<dbReference type="InterPro" id="IPR024784">
    <property type="entry name" value="TORC_M"/>
</dbReference>
<dbReference type="InterPro" id="IPR024783">
    <property type="entry name" value="TORC_N"/>
</dbReference>
<dbReference type="PANTHER" id="PTHR13589">
    <property type="entry name" value="CREB-REGULATED TRANSCRIPTION COACTIVATOR"/>
    <property type="match status" value="1"/>
</dbReference>
<dbReference type="PANTHER" id="PTHR13589:SF4">
    <property type="entry name" value="CREB-REGULATED TRANSCRIPTION COACTIVATOR 3"/>
    <property type="match status" value="1"/>
</dbReference>
<dbReference type="Pfam" id="PF12886">
    <property type="entry name" value="TORC_C"/>
    <property type="match status" value="1"/>
</dbReference>
<dbReference type="Pfam" id="PF12885">
    <property type="entry name" value="TORC_M"/>
    <property type="match status" value="1"/>
</dbReference>
<dbReference type="Pfam" id="PF12884">
    <property type="entry name" value="TORC_N"/>
    <property type="match status" value="1"/>
</dbReference>